<reference key="1">
    <citation type="journal article" date="2009" name="PLoS Genet.">
        <title>Organised genome dynamics in the Escherichia coli species results in highly diverse adaptive paths.</title>
        <authorList>
            <person name="Touchon M."/>
            <person name="Hoede C."/>
            <person name="Tenaillon O."/>
            <person name="Barbe V."/>
            <person name="Baeriswyl S."/>
            <person name="Bidet P."/>
            <person name="Bingen E."/>
            <person name="Bonacorsi S."/>
            <person name="Bouchier C."/>
            <person name="Bouvet O."/>
            <person name="Calteau A."/>
            <person name="Chiapello H."/>
            <person name="Clermont O."/>
            <person name="Cruveiller S."/>
            <person name="Danchin A."/>
            <person name="Diard M."/>
            <person name="Dossat C."/>
            <person name="Karoui M.E."/>
            <person name="Frapy E."/>
            <person name="Garry L."/>
            <person name="Ghigo J.M."/>
            <person name="Gilles A.M."/>
            <person name="Johnson J."/>
            <person name="Le Bouguenec C."/>
            <person name="Lescat M."/>
            <person name="Mangenot S."/>
            <person name="Martinez-Jehanne V."/>
            <person name="Matic I."/>
            <person name="Nassif X."/>
            <person name="Oztas S."/>
            <person name="Petit M.A."/>
            <person name="Pichon C."/>
            <person name="Rouy Z."/>
            <person name="Ruf C.S."/>
            <person name="Schneider D."/>
            <person name="Tourret J."/>
            <person name="Vacherie B."/>
            <person name="Vallenet D."/>
            <person name="Medigue C."/>
            <person name="Rocha E.P.C."/>
            <person name="Denamur E."/>
        </authorList>
    </citation>
    <scope>NUCLEOTIDE SEQUENCE [LARGE SCALE GENOMIC DNA]</scope>
    <source>
        <strain>S88 / ExPEC</strain>
    </source>
</reference>
<protein>
    <recommendedName>
        <fullName evidence="1">Cytochrome c-type biogenesis protein CcmE</fullName>
    </recommendedName>
    <alternativeName>
        <fullName evidence="1">Cytochrome c maturation protein E</fullName>
    </alternativeName>
    <alternativeName>
        <fullName evidence="1">Heme chaperone CcmE</fullName>
    </alternativeName>
</protein>
<feature type="chain" id="PRO_1000189013" description="Cytochrome c-type biogenesis protein CcmE">
    <location>
        <begin position="1"/>
        <end position="159"/>
    </location>
</feature>
<feature type="topological domain" description="Cytoplasmic" evidence="1">
    <location>
        <begin position="1"/>
        <end position="8"/>
    </location>
</feature>
<feature type="transmembrane region" description="Helical; Signal-anchor for type II membrane protein" evidence="1">
    <location>
        <begin position="9"/>
        <end position="29"/>
    </location>
</feature>
<feature type="topological domain" description="Periplasmic" evidence="1">
    <location>
        <begin position="30"/>
        <end position="159"/>
    </location>
</feature>
<feature type="region of interest" description="Disordered" evidence="2">
    <location>
        <begin position="132"/>
        <end position="159"/>
    </location>
</feature>
<feature type="compositionally biased region" description="Basic and acidic residues" evidence="2">
    <location>
        <begin position="132"/>
        <end position="147"/>
    </location>
</feature>
<feature type="binding site" description="covalent" evidence="1">
    <location>
        <position position="130"/>
    </location>
    <ligand>
        <name>heme</name>
        <dbReference type="ChEBI" id="CHEBI:30413"/>
    </ligand>
</feature>
<feature type="binding site" description="axial binding residue" evidence="1">
    <location>
        <position position="134"/>
    </location>
    <ligand>
        <name>heme</name>
        <dbReference type="ChEBI" id="CHEBI:30413"/>
    </ligand>
    <ligandPart>
        <name>Fe</name>
        <dbReference type="ChEBI" id="CHEBI:18248"/>
    </ligandPart>
</feature>
<name>CCME_ECO45</name>
<organism>
    <name type="scientific">Escherichia coli O45:K1 (strain S88 / ExPEC)</name>
    <dbReference type="NCBI Taxonomy" id="585035"/>
    <lineage>
        <taxon>Bacteria</taxon>
        <taxon>Pseudomonadati</taxon>
        <taxon>Pseudomonadota</taxon>
        <taxon>Gammaproteobacteria</taxon>
        <taxon>Enterobacterales</taxon>
        <taxon>Enterobacteriaceae</taxon>
        <taxon>Escherichia</taxon>
    </lineage>
</organism>
<proteinExistence type="inferred from homology"/>
<gene>
    <name evidence="1" type="primary">ccmE</name>
    <name evidence="1" type="synonym">cycJ</name>
    <name type="ordered locus">ECS88_2344</name>
</gene>
<comment type="function">
    <text evidence="1">Heme chaperone required for the biogenesis of c-type cytochromes. Transiently binds heme delivered by CcmC and transfers the heme to apo-cytochromes in a process facilitated by CcmF and CcmH.</text>
</comment>
<comment type="subcellular location">
    <subcellularLocation>
        <location evidence="1">Cell inner membrane</location>
        <topology evidence="1">Single-pass type II membrane protein</topology>
        <orientation evidence="1">Periplasmic side</orientation>
    </subcellularLocation>
</comment>
<comment type="similarity">
    <text evidence="1">Belongs to the CcmE/CycJ family.</text>
</comment>
<sequence>MNIRRKNRLWIACAVLAGLALTIGLVLYALRSNIDLFYTPGEILYGKRETQQMPEVGQRLRVGGMVMPGSVQRDPNSLKVTFTIYDAEGSVDVSYEGILPDLFREGQGVVVQGELEKGNHILAKEVLAKHDENYTPPEVEKAMEANHRRPASVYKDPAS</sequence>
<dbReference type="EMBL" id="CU928161">
    <property type="protein sequence ID" value="CAR03625.1"/>
    <property type="molecule type" value="Genomic_DNA"/>
</dbReference>
<dbReference type="RefSeq" id="WP_001026418.1">
    <property type="nucleotide sequence ID" value="NC_011742.1"/>
</dbReference>
<dbReference type="SMR" id="B7MFA9"/>
<dbReference type="GeneID" id="86860369"/>
<dbReference type="KEGG" id="ecz:ECS88_2344"/>
<dbReference type="HOGENOM" id="CLU_079503_1_0_6"/>
<dbReference type="Proteomes" id="UP000000747">
    <property type="component" value="Chromosome"/>
</dbReference>
<dbReference type="GO" id="GO:0005886">
    <property type="term" value="C:plasma membrane"/>
    <property type="evidence" value="ECO:0007669"/>
    <property type="project" value="UniProtKB-SubCell"/>
</dbReference>
<dbReference type="GO" id="GO:0020037">
    <property type="term" value="F:heme binding"/>
    <property type="evidence" value="ECO:0007669"/>
    <property type="project" value="InterPro"/>
</dbReference>
<dbReference type="GO" id="GO:0046872">
    <property type="term" value="F:metal ion binding"/>
    <property type="evidence" value="ECO:0007669"/>
    <property type="project" value="UniProtKB-KW"/>
</dbReference>
<dbReference type="GO" id="GO:0017004">
    <property type="term" value="P:cytochrome complex assembly"/>
    <property type="evidence" value="ECO:0007669"/>
    <property type="project" value="UniProtKB-KW"/>
</dbReference>
<dbReference type="FunFam" id="2.40.50.140:FF:000104">
    <property type="entry name" value="Cytochrome c-type biogenesis protein CcmE"/>
    <property type="match status" value="1"/>
</dbReference>
<dbReference type="Gene3D" id="2.40.50.140">
    <property type="entry name" value="Nucleic acid-binding proteins"/>
    <property type="match status" value="1"/>
</dbReference>
<dbReference type="HAMAP" id="MF_01959">
    <property type="entry name" value="CcmE"/>
    <property type="match status" value="1"/>
</dbReference>
<dbReference type="InterPro" id="IPR004329">
    <property type="entry name" value="CcmE"/>
</dbReference>
<dbReference type="InterPro" id="IPR036127">
    <property type="entry name" value="CcmE-like_sf"/>
</dbReference>
<dbReference type="InterPro" id="IPR012340">
    <property type="entry name" value="NA-bd_OB-fold"/>
</dbReference>
<dbReference type="NCBIfam" id="NF009635">
    <property type="entry name" value="PRK13150.1"/>
    <property type="match status" value="1"/>
</dbReference>
<dbReference type="NCBIfam" id="NF009638">
    <property type="entry name" value="PRK13165.1"/>
    <property type="match status" value="1"/>
</dbReference>
<dbReference type="NCBIfam" id="NF009727">
    <property type="entry name" value="PRK13254.1-1"/>
    <property type="match status" value="1"/>
</dbReference>
<dbReference type="NCBIfam" id="NF009729">
    <property type="entry name" value="PRK13254.1-3"/>
    <property type="match status" value="1"/>
</dbReference>
<dbReference type="PANTHER" id="PTHR34128">
    <property type="entry name" value="CYTOCHROME C-TYPE BIOGENESIS PROTEIN CCME HOMOLOG, MITOCHONDRIAL"/>
    <property type="match status" value="1"/>
</dbReference>
<dbReference type="PANTHER" id="PTHR34128:SF2">
    <property type="entry name" value="CYTOCHROME C-TYPE BIOGENESIS PROTEIN CCME HOMOLOG, MITOCHONDRIAL"/>
    <property type="match status" value="1"/>
</dbReference>
<dbReference type="Pfam" id="PF03100">
    <property type="entry name" value="CcmE"/>
    <property type="match status" value="1"/>
</dbReference>
<dbReference type="SUPFAM" id="SSF82093">
    <property type="entry name" value="Heme chaperone CcmE"/>
    <property type="match status" value="1"/>
</dbReference>
<accession>B7MFA9</accession>
<keyword id="KW-0997">Cell inner membrane</keyword>
<keyword id="KW-1003">Cell membrane</keyword>
<keyword id="KW-0201">Cytochrome c-type biogenesis</keyword>
<keyword id="KW-0349">Heme</keyword>
<keyword id="KW-0408">Iron</keyword>
<keyword id="KW-0472">Membrane</keyword>
<keyword id="KW-0479">Metal-binding</keyword>
<keyword id="KW-1185">Reference proteome</keyword>
<keyword id="KW-0735">Signal-anchor</keyword>
<keyword id="KW-0812">Transmembrane</keyword>
<keyword id="KW-1133">Transmembrane helix</keyword>
<evidence type="ECO:0000255" key="1">
    <source>
        <dbReference type="HAMAP-Rule" id="MF_01959"/>
    </source>
</evidence>
<evidence type="ECO:0000256" key="2">
    <source>
        <dbReference type="SAM" id="MobiDB-lite"/>
    </source>
</evidence>